<name>ORN_VIBC1</name>
<dbReference type="EC" id="3.1.15.-" evidence="1"/>
<dbReference type="EMBL" id="CP000789">
    <property type="protein sequence ID" value="ABU69160.1"/>
    <property type="molecule type" value="Genomic_DNA"/>
</dbReference>
<dbReference type="RefSeq" id="WP_012126478.1">
    <property type="nucleotide sequence ID" value="NC_022269.1"/>
</dbReference>
<dbReference type="SMR" id="A7MZ48"/>
<dbReference type="KEGG" id="vha:VIBHAR_00112"/>
<dbReference type="PATRIC" id="fig|338187.25.peg.2421"/>
<dbReference type="Proteomes" id="UP000008152">
    <property type="component" value="Chromosome I"/>
</dbReference>
<dbReference type="GO" id="GO:0005737">
    <property type="term" value="C:cytoplasm"/>
    <property type="evidence" value="ECO:0007669"/>
    <property type="project" value="UniProtKB-SubCell"/>
</dbReference>
<dbReference type="GO" id="GO:0000175">
    <property type="term" value="F:3'-5'-RNA exonuclease activity"/>
    <property type="evidence" value="ECO:0007669"/>
    <property type="project" value="InterPro"/>
</dbReference>
<dbReference type="GO" id="GO:0003676">
    <property type="term" value="F:nucleic acid binding"/>
    <property type="evidence" value="ECO:0007669"/>
    <property type="project" value="InterPro"/>
</dbReference>
<dbReference type="GO" id="GO:0006259">
    <property type="term" value="P:DNA metabolic process"/>
    <property type="evidence" value="ECO:0007669"/>
    <property type="project" value="UniProtKB-ARBA"/>
</dbReference>
<dbReference type="CDD" id="cd06135">
    <property type="entry name" value="Orn"/>
    <property type="match status" value="1"/>
</dbReference>
<dbReference type="FunFam" id="3.30.420.10:FF:000003">
    <property type="entry name" value="Oligoribonuclease"/>
    <property type="match status" value="1"/>
</dbReference>
<dbReference type="Gene3D" id="3.30.420.10">
    <property type="entry name" value="Ribonuclease H-like superfamily/Ribonuclease H"/>
    <property type="match status" value="1"/>
</dbReference>
<dbReference type="HAMAP" id="MF_00045">
    <property type="entry name" value="Oligoribonuclease"/>
    <property type="match status" value="1"/>
</dbReference>
<dbReference type="InterPro" id="IPR013520">
    <property type="entry name" value="Exonuclease_RNaseT/DNA_pol3"/>
</dbReference>
<dbReference type="InterPro" id="IPR022894">
    <property type="entry name" value="Oligoribonuclease"/>
</dbReference>
<dbReference type="InterPro" id="IPR012337">
    <property type="entry name" value="RNaseH-like_sf"/>
</dbReference>
<dbReference type="InterPro" id="IPR036397">
    <property type="entry name" value="RNaseH_sf"/>
</dbReference>
<dbReference type="NCBIfam" id="NF003765">
    <property type="entry name" value="PRK05359.1"/>
    <property type="match status" value="1"/>
</dbReference>
<dbReference type="PANTHER" id="PTHR11046">
    <property type="entry name" value="OLIGORIBONUCLEASE, MITOCHONDRIAL"/>
    <property type="match status" value="1"/>
</dbReference>
<dbReference type="PANTHER" id="PTHR11046:SF0">
    <property type="entry name" value="OLIGORIBONUCLEASE, MITOCHONDRIAL"/>
    <property type="match status" value="1"/>
</dbReference>
<dbReference type="Pfam" id="PF00929">
    <property type="entry name" value="RNase_T"/>
    <property type="match status" value="1"/>
</dbReference>
<dbReference type="SMART" id="SM00479">
    <property type="entry name" value="EXOIII"/>
    <property type="match status" value="1"/>
</dbReference>
<dbReference type="SUPFAM" id="SSF53098">
    <property type="entry name" value="Ribonuclease H-like"/>
    <property type="match status" value="1"/>
</dbReference>
<gene>
    <name evidence="1" type="primary">orn</name>
    <name type="ordered locus">VIBHAR_00112</name>
</gene>
<sequence length="181" mass="20959">MSFSDQNLIWVDLEMTGLDPETHKIIEIASIVTDSELNILAEGPVLAVHQPEEELVKMDDWCTNTHTSSGLVERVRNSDVSEQDAVAQTIEFLEKWVPKGVSPICGNSIGQDRRFLYKHMPELEEYFHYRYLDVSTLKELTRRWKPEVLDGFSKQGTHLALDDIRESIAELKYYRETIFKI</sequence>
<comment type="function">
    <text evidence="1">3'-to-5' exoribonuclease specific for small oligoribonucleotides.</text>
</comment>
<comment type="subcellular location">
    <subcellularLocation>
        <location evidence="1">Cytoplasm</location>
    </subcellularLocation>
</comment>
<comment type="similarity">
    <text evidence="1">Belongs to the oligoribonuclease family.</text>
</comment>
<evidence type="ECO:0000255" key="1">
    <source>
        <dbReference type="HAMAP-Rule" id="MF_00045"/>
    </source>
</evidence>
<accession>A7MZ48</accession>
<organism>
    <name type="scientific">Vibrio campbellii (strain ATCC BAA-1116)</name>
    <dbReference type="NCBI Taxonomy" id="2902295"/>
    <lineage>
        <taxon>Bacteria</taxon>
        <taxon>Pseudomonadati</taxon>
        <taxon>Pseudomonadota</taxon>
        <taxon>Gammaproteobacteria</taxon>
        <taxon>Vibrionales</taxon>
        <taxon>Vibrionaceae</taxon>
        <taxon>Vibrio</taxon>
    </lineage>
</organism>
<keyword id="KW-0963">Cytoplasm</keyword>
<keyword id="KW-0269">Exonuclease</keyword>
<keyword id="KW-0378">Hydrolase</keyword>
<keyword id="KW-0540">Nuclease</keyword>
<reference key="1">
    <citation type="submission" date="2007-08" db="EMBL/GenBank/DDBJ databases">
        <authorList>
            <consortium name="The Vibrio harveyi Genome Sequencing Project"/>
            <person name="Bassler B."/>
            <person name="Clifton S.W."/>
            <person name="Fulton L."/>
            <person name="Delehaunty K."/>
            <person name="Fronick C."/>
            <person name="Harrison M."/>
            <person name="Markivic C."/>
            <person name="Fulton R."/>
            <person name="Tin-Wollam A.-M."/>
            <person name="Shah N."/>
            <person name="Pepin K."/>
            <person name="Nash W."/>
            <person name="Thiruvilangam P."/>
            <person name="Bhonagiri V."/>
            <person name="Waters C."/>
            <person name="Tu K.C."/>
            <person name="Irgon J."/>
            <person name="Wilson R.K."/>
        </authorList>
    </citation>
    <scope>NUCLEOTIDE SEQUENCE [LARGE SCALE GENOMIC DNA]</scope>
    <source>
        <strain>ATCC BAA-1116 / BB120</strain>
    </source>
</reference>
<proteinExistence type="inferred from homology"/>
<protein>
    <recommendedName>
        <fullName evidence="1">Oligoribonuclease</fullName>
        <ecNumber evidence="1">3.1.15.-</ecNumber>
    </recommendedName>
</protein>
<feature type="chain" id="PRO_1000004296" description="Oligoribonuclease">
    <location>
        <begin position="1"/>
        <end position="181"/>
    </location>
</feature>
<feature type="domain" description="Exonuclease" evidence="1">
    <location>
        <begin position="8"/>
        <end position="171"/>
    </location>
</feature>
<feature type="active site" evidence="1">
    <location>
        <position position="129"/>
    </location>
</feature>